<accession>P39817</accession>
<protein>
    <recommendedName>
        <fullName evidence="4">Proton/glutamate-aspartate symporter</fullName>
    </recommendedName>
    <alternativeName>
        <fullName evidence="3">Proton/glutamate symport protein</fullName>
    </alternativeName>
</protein>
<proteinExistence type="evidence at protein level"/>
<dbReference type="EMBL" id="U15147">
    <property type="protein sequence ID" value="AAA82878.1"/>
    <property type="molecule type" value="Genomic_DNA"/>
</dbReference>
<dbReference type="EMBL" id="AB006424">
    <property type="protein sequence ID" value="BAA33131.1"/>
    <property type="molecule type" value="Genomic_DNA"/>
</dbReference>
<dbReference type="EMBL" id="AL009126">
    <property type="protein sequence ID" value="CAB12028.1"/>
    <property type="molecule type" value="Genomic_DNA"/>
</dbReference>
<dbReference type="PIR" id="B57142">
    <property type="entry name" value="B57142"/>
</dbReference>
<dbReference type="RefSeq" id="NP_388116.1">
    <property type="nucleotide sequence ID" value="NC_000964.3"/>
</dbReference>
<dbReference type="RefSeq" id="WP_003234847.1">
    <property type="nucleotide sequence ID" value="NZ_OZ025638.1"/>
</dbReference>
<dbReference type="SMR" id="P39817"/>
<dbReference type="FunCoup" id="P39817">
    <property type="interactions" value="137"/>
</dbReference>
<dbReference type="STRING" id="224308.BSU02340"/>
<dbReference type="PaxDb" id="224308-BSU02340"/>
<dbReference type="EnsemblBacteria" id="CAB12028">
    <property type="protein sequence ID" value="CAB12028"/>
    <property type="gene ID" value="BSU_02340"/>
</dbReference>
<dbReference type="GeneID" id="938421"/>
<dbReference type="KEGG" id="bsu:BSU02340"/>
<dbReference type="PATRIC" id="fig|224308.179.peg.240"/>
<dbReference type="eggNOG" id="COG1301">
    <property type="taxonomic scope" value="Bacteria"/>
</dbReference>
<dbReference type="InParanoid" id="P39817"/>
<dbReference type="OrthoDB" id="7778689at2"/>
<dbReference type="PhylomeDB" id="P39817"/>
<dbReference type="BioCyc" id="BSUB:BSU02340-MONOMER"/>
<dbReference type="Proteomes" id="UP000001570">
    <property type="component" value="Chromosome"/>
</dbReference>
<dbReference type="GO" id="GO:0005886">
    <property type="term" value="C:plasma membrane"/>
    <property type="evidence" value="ECO:0000318"/>
    <property type="project" value="GO_Central"/>
</dbReference>
<dbReference type="GO" id="GO:0015293">
    <property type="term" value="F:symporter activity"/>
    <property type="evidence" value="ECO:0007669"/>
    <property type="project" value="UniProtKB-KW"/>
</dbReference>
<dbReference type="GO" id="GO:0022857">
    <property type="term" value="F:transmembrane transporter activity"/>
    <property type="evidence" value="ECO:0000318"/>
    <property type="project" value="GO_Central"/>
</dbReference>
<dbReference type="GO" id="GO:0006865">
    <property type="term" value="P:amino acid transport"/>
    <property type="evidence" value="ECO:0007669"/>
    <property type="project" value="UniProtKB-KW"/>
</dbReference>
<dbReference type="GO" id="GO:0006835">
    <property type="term" value="P:dicarboxylic acid transport"/>
    <property type="evidence" value="ECO:0000318"/>
    <property type="project" value="GO_Central"/>
</dbReference>
<dbReference type="FunFam" id="1.10.3860.10:FF:000001">
    <property type="entry name" value="C4-dicarboxylate transport protein"/>
    <property type="match status" value="1"/>
</dbReference>
<dbReference type="Gene3D" id="1.10.3860.10">
    <property type="entry name" value="Sodium:dicarboxylate symporter"/>
    <property type="match status" value="1"/>
</dbReference>
<dbReference type="InterPro" id="IPR001991">
    <property type="entry name" value="Na-dicarboxylate_symporter"/>
</dbReference>
<dbReference type="InterPro" id="IPR018107">
    <property type="entry name" value="Na-dicarboxylate_symporter_CS"/>
</dbReference>
<dbReference type="InterPro" id="IPR036458">
    <property type="entry name" value="Na:dicarbo_symporter_sf"/>
</dbReference>
<dbReference type="PANTHER" id="PTHR42865">
    <property type="entry name" value="PROTON/GLUTAMATE-ASPARTATE SYMPORTER"/>
    <property type="match status" value="1"/>
</dbReference>
<dbReference type="PANTHER" id="PTHR42865:SF7">
    <property type="entry name" value="PROTON_GLUTAMATE-ASPARTATE SYMPORTER"/>
    <property type="match status" value="1"/>
</dbReference>
<dbReference type="Pfam" id="PF00375">
    <property type="entry name" value="SDF"/>
    <property type="match status" value="1"/>
</dbReference>
<dbReference type="PRINTS" id="PR00173">
    <property type="entry name" value="EDTRNSPORT"/>
</dbReference>
<dbReference type="SUPFAM" id="SSF118215">
    <property type="entry name" value="Proton glutamate symport protein"/>
    <property type="match status" value="1"/>
</dbReference>
<dbReference type="PROSITE" id="PS00713">
    <property type="entry name" value="NA_DICARBOXYL_SYMP_1"/>
    <property type="match status" value="1"/>
</dbReference>
<dbReference type="PROSITE" id="PS00714">
    <property type="entry name" value="NA_DICARBOXYL_SYMP_2"/>
    <property type="match status" value="1"/>
</dbReference>
<evidence type="ECO:0000255" key="1"/>
<evidence type="ECO:0000269" key="2">
    <source>
    </source>
</evidence>
<evidence type="ECO:0000303" key="3">
    <source>
    </source>
</evidence>
<evidence type="ECO:0000305" key="4"/>
<feature type="chain" id="PRO_0000202087" description="Proton/glutamate-aspartate symporter">
    <location>
        <begin position="1"/>
        <end position="414"/>
    </location>
</feature>
<feature type="topological domain" description="Cytoplasmic" evidence="4">
    <location>
        <begin position="1"/>
        <end position="3"/>
    </location>
</feature>
<feature type="transmembrane region" description="Helical" evidence="1">
    <location>
        <begin position="4"/>
        <end position="24"/>
    </location>
</feature>
<feature type="topological domain" description="Extracellular" evidence="4">
    <location>
        <begin position="25"/>
        <end position="42"/>
    </location>
</feature>
<feature type="transmembrane region" description="Helical" evidence="1">
    <location>
        <begin position="43"/>
        <end position="63"/>
    </location>
</feature>
<feature type="topological domain" description="Cytoplasmic" evidence="4">
    <location>
        <begin position="64"/>
        <end position="73"/>
    </location>
</feature>
<feature type="transmembrane region" description="Helical" evidence="1">
    <location>
        <begin position="74"/>
        <end position="94"/>
    </location>
</feature>
<feature type="topological domain" description="Extracellular" evidence="4">
    <location>
        <begin position="95"/>
        <end position="144"/>
    </location>
</feature>
<feature type="transmembrane region" description="Helical" evidence="1">
    <location>
        <begin position="145"/>
        <end position="165"/>
    </location>
</feature>
<feature type="topological domain" description="Cytoplasmic" evidence="4">
    <location>
        <begin position="166"/>
        <end position="182"/>
    </location>
</feature>
<feature type="transmembrane region" description="Helical" evidence="1">
    <location>
        <begin position="183"/>
        <end position="203"/>
    </location>
</feature>
<feature type="topological domain" description="Extracellular" evidence="4">
    <location>
        <begin position="204"/>
        <end position="219"/>
    </location>
</feature>
<feature type="transmembrane region" description="Helical" evidence="1">
    <location>
        <begin position="220"/>
        <end position="240"/>
    </location>
</feature>
<feature type="topological domain" description="Cytoplasmic" evidence="4">
    <location>
        <position position="241"/>
    </location>
</feature>
<feature type="transmembrane region" description="Helical" evidence="1">
    <location>
        <begin position="242"/>
        <end position="262"/>
    </location>
</feature>
<feature type="topological domain" description="Extracellular" evidence="4">
    <location>
        <begin position="263"/>
        <end position="300"/>
    </location>
</feature>
<feature type="transmembrane region" description="Helical" evidence="1">
    <location>
        <begin position="301"/>
        <end position="321"/>
    </location>
</feature>
<feature type="topological domain" description="Cytoplasmic" evidence="4">
    <location>
        <begin position="322"/>
        <end position="324"/>
    </location>
</feature>
<feature type="transmembrane region" description="Helical" evidence="1">
    <location>
        <begin position="325"/>
        <end position="345"/>
    </location>
</feature>
<feature type="transmembrane region" description="Helical" evidence="1">
    <location>
        <begin position="346"/>
        <end position="366"/>
    </location>
</feature>
<feature type="topological domain" description="Cytoplasmic" evidence="4">
    <location>
        <begin position="367"/>
        <end position="414"/>
    </location>
</feature>
<comment type="function">
    <text evidence="2">Catalyzes the proton-dependent, binding-protein-independent transport of glutamate and aspartate.</text>
</comment>
<comment type="activity regulation">
    <text evidence="2">Glutamate uptake is inhibited by beta-hydroxyaspartate and cysteic acid.</text>
</comment>
<comment type="biophysicochemical properties">
    <kinetics>
        <KM evidence="2">9 uM for glutamate</KM>
        <Vmax evidence="2">65.0 nmol/min/mg enzyme with glutamate as substrate</Vmax>
    </kinetics>
</comment>
<comment type="subcellular location">
    <subcellularLocation>
        <location evidence="2">Cell membrane</location>
        <topology evidence="1">Multi-pass membrane protein</topology>
    </subcellularLocation>
</comment>
<comment type="similarity">
    <text evidence="4">Belongs to the dicarboxylate/amino acid:cation symporter (DAACS) (TC 2.A.23) family.</text>
</comment>
<organism>
    <name type="scientific">Bacillus subtilis (strain 168)</name>
    <dbReference type="NCBI Taxonomy" id="224308"/>
    <lineage>
        <taxon>Bacteria</taxon>
        <taxon>Bacillati</taxon>
        <taxon>Bacillota</taxon>
        <taxon>Bacilli</taxon>
        <taxon>Bacillales</taxon>
        <taxon>Bacillaceae</taxon>
        <taxon>Bacillus</taxon>
    </lineage>
</organism>
<sequence length="414" mass="44615">MKKLIAFQILIALAVGAVIGHFFPDFGMALRPVGDGFIRLIKMIVVPIVFSTIVIGAAGSGSMKKMGSLGIKTIIWFEVITTLVLGLGLLLANVLKPGVGLDLSHLAKKDIHELSGYTDKVVDFKQMILDIIPTNIIDVMARNDLLAVIFFAILFGVAAAGIGKASEPVMKFFESTAQIMFKLTQIVMVTAPIGVLALMAASVGQYGIELLLPMFKLVGTVFLGLFLILFVLFPLVGLIFQIKYFEVLKMIWDLFLIAFSTTSTETILPQLMDRMEKYGCPKRVVSFVVPSGLSLNCDGSSLYLSVSCIFLAQAFQVDMTLSQQLLMMLVLVMTSKGIAAVPSGSLVVLLATANAVGLPAEGVAIIAGVDRVMDMARTGVNVPGHAIACIVVSKWEKAFRQKEWVSANSQTESI</sequence>
<keyword id="KW-0029">Amino-acid transport</keyword>
<keyword id="KW-1003">Cell membrane</keyword>
<keyword id="KW-0472">Membrane</keyword>
<keyword id="KW-1185">Reference proteome</keyword>
<keyword id="KW-0769">Symport</keyword>
<keyword id="KW-0812">Transmembrane</keyword>
<keyword id="KW-1133">Transmembrane helix</keyword>
<keyword id="KW-0813">Transport</keyword>
<name>GLTP_BACSU</name>
<gene>
    <name evidence="3" type="primary">gltP</name>
    <name type="ordered locus">BSU02340</name>
</gene>
<reference key="1">
    <citation type="journal article" date="1995" name="J. Bacteriol.">
        <title>Characterization of the proton/glutamate symport protein of Bacillus subtilis and its functional expression in Escherichia coli.</title>
        <authorList>
            <person name="Tolner B."/>
            <person name="Ubbink-Kok T."/>
            <person name="Poolman B."/>
            <person name="Konings W.N."/>
        </authorList>
    </citation>
    <scope>NUCLEOTIDE SEQUENCE [GENOMIC DNA]</scope>
    <scope>FUNCTION</scope>
    <scope>ACTIVITY REGULATION</scope>
    <scope>BIOPHYSICOCHEMICAL PROPERTIES</scope>
    <scope>SUBCELLULAR LOCATION</scope>
    <source>
        <strain>168 / 6GM</strain>
    </source>
</reference>
<reference key="2">
    <citation type="submission" date="1997-07" db="EMBL/GenBank/DDBJ databases">
        <title>Sequence analysis of the 70kb region between 17 and 23 degree of the Bacillus subtilis chromosome.</title>
        <authorList>
            <person name="Haga K."/>
            <person name="Liu H."/>
            <person name="Yasumoto K."/>
            <person name="Takahashi H."/>
            <person name="Yoshikawa H."/>
        </authorList>
    </citation>
    <scope>NUCLEOTIDE SEQUENCE [GENOMIC DNA]</scope>
    <source>
        <strain>168</strain>
    </source>
</reference>
<reference key="3">
    <citation type="journal article" date="1997" name="Nature">
        <title>The complete genome sequence of the Gram-positive bacterium Bacillus subtilis.</title>
        <authorList>
            <person name="Kunst F."/>
            <person name="Ogasawara N."/>
            <person name="Moszer I."/>
            <person name="Albertini A.M."/>
            <person name="Alloni G."/>
            <person name="Azevedo V."/>
            <person name="Bertero M.G."/>
            <person name="Bessieres P."/>
            <person name="Bolotin A."/>
            <person name="Borchert S."/>
            <person name="Borriss R."/>
            <person name="Boursier L."/>
            <person name="Brans A."/>
            <person name="Braun M."/>
            <person name="Brignell S.C."/>
            <person name="Bron S."/>
            <person name="Brouillet S."/>
            <person name="Bruschi C.V."/>
            <person name="Caldwell B."/>
            <person name="Capuano V."/>
            <person name="Carter N.M."/>
            <person name="Choi S.-K."/>
            <person name="Codani J.-J."/>
            <person name="Connerton I.F."/>
            <person name="Cummings N.J."/>
            <person name="Daniel R.A."/>
            <person name="Denizot F."/>
            <person name="Devine K.M."/>
            <person name="Duesterhoeft A."/>
            <person name="Ehrlich S.D."/>
            <person name="Emmerson P.T."/>
            <person name="Entian K.-D."/>
            <person name="Errington J."/>
            <person name="Fabret C."/>
            <person name="Ferrari E."/>
            <person name="Foulger D."/>
            <person name="Fritz C."/>
            <person name="Fujita M."/>
            <person name="Fujita Y."/>
            <person name="Fuma S."/>
            <person name="Galizzi A."/>
            <person name="Galleron N."/>
            <person name="Ghim S.-Y."/>
            <person name="Glaser P."/>
            <person name="Goffeau A."/>
            <person name="Golightly E.J."/>
            <person name="Grandi G."/>
            <person name="Guiseppi G."/>
            <person name="Guy B.J."/>
            <person name="Haga K."/>
            <person name="Haiech J."/>
            <person name="Harwood C.R."/>
            <person name="Henaut A."/>
            <person name="Hilbert H."/>
            <person name="Holsappel S."/>
            <person name="Hosono S."/>
            <person name="Hullo M.-F."/>
            <person name="Itaya M."/>
            <person name="Jones L.-M."/>
            <person name="Joris B."/>
            <person name="Karamata D."/>
            <person name="Kasahara Y."/>
            <person name="Klaerr-Blanchard M."/>
            <person name="Klein C."/>
            <person name="Kobayashi Y."/>
            <person name="Koetter P."/>
            <person name="Koningstein G."/>
            <person name="Krogh S."/>
            <person name="Kumano M."/>
            <person name="Kurita K."/>
            <person name="Lapidus A."/>
            <person name="Lardinois S."/>
            <person name="Lauber J."/>
            <person name="Lazarevic V."/>
            <person name="Lee S.-M."/>
            <person name="Levine A."/>
            <person name="Liu H."/>
            <person name="Masuda S."/>
            <person name="Mauel C."/>
            <person name="Medigue C."/>
            <person name="Medina N."/>
            <person name="Mellado R.P."/>
            <person name="Mizuno M."/>
            <person name="Moestl D."/>
            <person name="Nakai S."/>
            <person name="Noback M."/>
            <person name="Noone D."/>
            <person name="O'Reilly M."/>
            <person name="Ogawa K."/>
            <person name="Ogiwara A."/>
            <person name="Oudega B."/>
            <person name="Park S.-H."/>
            <person name="Parro V."/>
            <person name="Pohl T.M."/>
            <person name="Portetelle D."/>
            <person name="Porwollik S."/>
            <person name="Prescott A.M."/>
            <person name="Presecan E."/>
            <person name="Pujic P."/>
            <person name="Purnelle B."/>
            <person name="Rapoport G."/>
            <person name="Rey M."/>
            <person name="Reynolds S."/>
            <person name="Rieger M."/>
            <person name="Rivolta C."/>
            <person name="Rocha E."/>
            <person name="Roche B."/>
            <person name="Rose M."/>
            <person name="Sadaie Y."/>
            <person name="Sato T."/>
            <person name="Scanlan E."/>
            <person name="Schleich S."/>
            <person name="Schroeter R."/>
            <person name="Scoffone F."/>
            <person name="Sekiguchi J."/>
            <person name="Sekowska A."/>
            <person name="Seror S.J."/>
            <person name="Serror P."/>
            <person name="Shin B.-S."/>
            <person name="Soldo B."/>
            <person name="Sorokin A."/>
            <person name="Tacconi E."/>
            <person name="Takagi T."/>
            <person name="Takahashi H."/>
            <person name="Takemaru K."/>
            <person name="Takeuchi M."/>
            <person name="Tamakoshi A."/>
            <person name="Tanaka T."/>
            <person name="Terpstra P."/>
            <person name="Tognoni A."/>
            <person name="Tosato V."/>
            <person name="Uchiyama S."/>
            <person name="Vandenbol M."/>
            <person name="Vannier F."/>
            <person name="Vassarotti A."/>
            <person name="Viari A."/>
            <person name="Wambutt R."/>
            <person name="Wedler E."/>
            <person name="Wedler H."/>
            <person name="Weitzenegger T."/>
            <person name="Winters P."/>
            <person name="Wipat A."/>
            <person name="Yamamoto H."/>
            <person name="Yamane K."/>
            <person name="Yasumoto K."/>
            <person name="Yata K."/>
            <person name="Yoshida K."/>
            <person name="Yoshikawa H.-F."/>
            <person name="Zumstein E."/>
            <person name="Yoshikawa H."/>
            <person name="Danchin A."/>
        </authorList>
    </citation>
    <scope>NUCLEOTIDE SEQUENCE [LARGE SCALE GENOMIC DNA]</scope>
    <source>
        <strain>168</strain>
    </source>
</reference>